<accession>O20264</accession>
<proteinExistence type="inferred from homology"/>
<evidence type="ECO:0000250" key="1"/>
<evidence type="ECO:0000256" key="2">
    <source>
        <dbReference type="SAM" id="MobiDB-lite"/>
    </source>
</evidence>
<evidence type="ECO:0000305" key="3"/>
<protein>
    <recommendedName>
        <fullName evidence="3">Small ribosomal subunit protein uS4c</fullName>
    </recommendedName>
    <alternativeName>
        <fullName>30S ribosomal protein S4, chloroplastic</fullName>
    </alternativeName>
</protein>
<reference key="1">
    <citation type="journal article" date="1997" name="Plant Syst. Evol.">
        <title>Phylogenetic analysis of Iridaceae with parsimony and distance methods using the plastid gene rps4.</title>
        <authorList>
            <person name="Souza-Chies T.T."/>
            <person name="Bittar G."/>
            <person name="Nadot S."/>
            <person name="Carter L."/>
            <person name="Besin E."/>
            <person name="Lejeune B.P."/>
        </authorList>
    </citation>
    <scope>NUCLEOTIDE SEQUENCE [GENOMIC DNA]</scope>
</reference>
<geneLocation type="chloroplast"/>
<dbReference type="EMBL" id="Z68258">
    <property type="protein sequence ID" value="CAA92556.1"/>
    <property type="molecule type" value="Genomic_DNA"/>
</dbReference>
<dbReference type="SMR" id="O20264"/>
<dbReference type="GO" id="GO:0009507">
    <property type="term" value="C:chloroplast"/>
    <property type="evidence" value="ECO:0007669"/>
    <property type="project" value="UniProtKB-SubCell"/>
</dbReference>
<dbReference type="GO" id="GO:0015935">
    <property type="term" value="C:small ribosomal subunit"/>
    <property type="evidence" value="ECO:0007669"/>
    <property type="project" value="InterPro"/>
</dbReference>
<dbReference type="GO" id="GO:0019843">
    <property type="term" value="F:rRNA binding"/>
    <property type="evidence" value="ECO:0007669"/>
    <property type="project" value="UniProtKB-KW"/>
</dbReference>
<dbReference type="GO" id="GO:0003735">
    <property type="term" value="F:structural constituent of ribosome"/>
    <property type="evidence" value="ECO:0007669"/>
    <property type="project" value="InterPro"/>
</dbReference>
<dbReference type="GO" id="GO:0042274">
    <property type="term" value="P:ribosomal small subunit biogenesis"/>
    <property type="evidence" value="ECO:0007669"/>
    <property type="project" value="TreeGrafter"/>
</dbReference>
<dbReference type="GO" id="GO:0006412">
    <property type="term" value="P:translation"/>
    <property type="evidence" value="ECO:0007669"/>
    <property type="project" value="InterPro"/>
</dbReference>
<dbReference type="CDD" id="cd00165">
    <property type="entry name" value="S4"/>
    <property type="match status" value="1"/>
</dbReference>
<dbReference type="FunFam" id="1.10.1050.10:FF:000002">
    <property type="entry name" value="30S ribosomal protein S4, chloroplastic"/>
    <property type="match status" value="1"/>
</dbReference>
<dbReference type="FunFam" id="3.10.290.10:FF:000081">
    <property type="entry name" value="30S ribosomal protein S4, chloroplastic"/>
    <property type="match status" value="1"/>
</dbReference>
<dbReference type="Gene3D" id="1.10.1050.10">
    <property type="entry name" value="Ribosomal Protein S4 Delta 41, Chain A, domain 1"/>
    <property type="match status" value="1"/>
</dbReference>
<dbReference type="Gene3D" id="3.10.290.10">
    <property type="entry name" value="RNA-binding S4 domain"/>
    <property type="match status" value="1"/>
</dbReference>
<dbReference type="HAMAP" id="MF_01306_B">
    <property type="entry name" value="Ribosomal_uS4_B"/>
    <property type="match status" value="1"/>
</dbReference>
<dbReference type="InterPro" id="IPR022801">
    <property type="entry name" value="Ribosomal_uS4"/>
</dbReference>
<dbReference type="InterPro" id="IPR005709">
    <property type="entry name" value="Ribosomal_uS4_bac-type"/>
</dbReference>
<dbReference type="InterPro" id="IPR018079">
    <property type="entry name" value="Ribosomal_uS4_CS"/>
</dbReference>
<dbReference type="InterPro" id="IPR001912">
    <property type="entry name" value="Ribosomal_uS4_N"/>
</dbReference>
<dbReference type="InterPro" id="IPR002942">
    <property type="entry name" value="S4_RNA-bd"/>
</dbReference>
<dbReference type="InterPro" id="IPR036986">
    <property type="entry name" value="S4_RNA-bd_sf"/>
</dbReference>
<dbReference type="NCBIfam" id="NF003717">
    <property type="entry name" value="PRK05327.1"/>
    <property type="match status" value="1"/>
</dbReference>
<dbReference type="NCBIfam" id="TIGR01017">
    <property type="entry name" value="rpsD_bact"/>
    <property type="match status" value="1"/>
</dbReference>
<dbReference type="PANTHER" id="PTHR11831">
    <property type="entry name" value="30S 40S RIBOSOMAL PROTEIN"/>
    <property type="match status" value="1"/>
</dbReference>
<dbReference type="PANTHER" id="PTHR11831:SF4">
    <property type="entry name" value="SMALL RIBOSOMAL SUBUNIT PROTEIN US4M"/>
    <property type="match status" value="1"/>
</dbReference>
<dbReference type="Pfam" id="PF00163">
    <property type="entry name" value="Ribosomal_S4"/>
    <property type="match status" value="1"/>
</dbReference>
<dbReference type="Pfam" id="PF01479">
    <property type="entry name" value="S4"/>
    <property type="match status" value="1"/>
</dbReference>
<dbReference type="SMART" id="SM01390">
    <property type="entry name" value="Ribosomal_S4"/>
    <property type="match status" value="1"/>
</dbReference>
<dbReference type="SMART" id="SM00363">
    <property type="entry name" value="S4"/>
    <property type="match status" value="1"/>
</dbReference>
<dbReference type="SUPFAM" id="SSF55174">
    <property type="entry name" value="Alpha-L RNA-binding motif"/>
    <property type="match status" value="1"/>
</dbReference>
<dbReference type="PROSITE" id="PS00632">
    <property type="entry name" value="RIBOSOMAL_S4"/>
    <property type="match status" value="1"/>
</dbReference>
<dbReference type="PROSITE" id="PS50889">
    <property type="entry name" value="S4"/>
    <property type="match status" value="1"/>
</dbReference>
<sequence length="194" mass="22426">RFKKIRRLGALPGLTSKRPRSGSDPKNQLRSGKKSQYRIRLEEKQKLRFHYGLTERQLLKYVHIAGKAKGSTGQVLLQLLEMRLDNILFRLGMASTIPGARQLVTHRHILVNGRIMDIPSYRCKPRDIITTKDKQRSKALIQNYIASSPQEELPNHLTIDPIQYKGLVNQIIDSKWIGLKINELLVVEYYSRQT</sequence>
<organism>
    <name type="scientific">Moraea spathulata</name>
    <name type="common">Large yellow moraea</name>
    <dbReference type="NCBI Taxonomy" id="58964"/>
    <lineage>
        <taxon>Eukaryota</taxon>
        <taxon>Viridiplantae</taxon>
        <taxon>Streptophyta</taxon>
        <taxon>Embryophyta</taxon>
        <taxon>Tracheophyta</taxon>
        <taxon>Spermatophyta</taxon>
        <taxon>Magnoliopsida</taxon>
        <taxon>Liliopsida</taxon>
        <taxon>Asparagales</taxon>
        <taxon>Iridaceae</taxon>
        <taxon>Iridoideae</taxon>
        <taxon>Irideae</taxon>
        <taxon>Moraea</taxon>
    </lineage>
</organism>
<gene>
    <name type="primary">rps4</name>
</gene>
<comment type="function">
    <text evidence="1">One of the primary rRNA binding proteins, it binds directly to 16S rRNA where it nucleates assembly of the body of the 30S subunit.</text>
</comment>
<comment type="function">
    <text evidence="1">With S5 and S12 plays an important role in translational accuracy.</text>
</comment>
<comment type="subunit">
    <text evidence="1">Part of the 30S ribosomal subunit. Contacts protein S5. The interaction surface between S4 and S5 is involved in control of translational fidelity (By similarity).</text>
</comment>
<comment type="subcellular location">
    <subcellularLocation>
        <location>Plastid</location>
        <location>Chloroplast</location>
    </subcellularLocation>
</comment>
<comment type="similarity">
    <text evidence="3">Belongs to the universal ribosomal protein uS4 family.</text>
</comment>
<keyword id="KW-0150">Chloroplast</keyword>
<keyword id="KW-0934">Plastid</keyword>
<keyword id="KW-0687">Ribonucleoprotein</keyword>
<keyword id="KW-0689">Ribosomal protein</keyword>
<keyword id="KW-0694">RNA-binding</keyword>
<keyword id="KW-0699">rRNA-binding</keyword>
<name>RR4_MORST</name>
<feature type="chain" id="PRO_0000132631" description="Small ribosomal subunit protein uS4c">
    <location>
        <begin position="1" status="less than"/>
        <end position="194" status="greater than"/>
    </location>
</feature>
<feature type="domain" description="S4 RNA-binding">
    <location>
        <begin position="82"/>
        <end position="143"/>
    </location>
</feature>
<feature type="region of interest" description="Disordered" evidence="2">
    <location>
        <begin position="13"/>
        <end position="36"/>
    </location>
</feature>
<feature type="non-terminal residue">
    <location>
        <position position="1"/>
    </location>
</feature>
<feature type="non-terminal residue">
    <location>
        <position position="194"/>
    </location>
</feature>